<keyword id="KW-0963">Cytoplasm</keyword>
<keyword id="KW-0521">NADP</keyword>
<keyword id="KW-0560">Oxidoreductase</keyword>
<keyword id="KW-0671">Queuosine biosynthesis</keyword>
<organism>
    <name type="scientific">Psychrobacter cryohalolentis (strain ATCC BAA-1226 / DSM 17306 / VKM B-2378 / K5)</name>
    <dbReference type="NCBI Taxonomy" id="335284"/>
    <lineage>
        <taxon>Bacteria</taxon>
        <taxon>Pseudomonadati</taxon>
        <taxon>Pseudomonadota</taxon>
        <taxon>Gammaproteobacteria</taxon>
        <taxon>Moraxellales</taxon>
        <taxon>Moraxellaceae</taxon>
        <taxon>Psychrobacter</taxon>
    </lineage>
</organism>
<name>QUEF_PSYCK</name>
<dbReference type="EC" id="1.7.1.13" evidence="1"/>
<dbReference type="EMBL" id="CP000323">
    <property type="protein sequence ID" value="ABE74245.1"/>
    <property type="molecule type" value="Genomic_DNA"/>
</dbReference>
<dbReference type="RefSeq" id="WP_011512830.1">
    <property type="nucleotide sequence ID" value="NC_007969.1"/>
</dbReference>
<dbReference type="SMR" id="Q1QDK8"/>
<dbReference type="STRING" id="335284.Pcryo_0462"/>
<dbReference type="KEGG" id="pcr:Pcryo_0462"/>
<dbReference type="eggNOG" id="COG0780">
    <property type="taxonomic scope" value="Bacteria"/>
</dbReference>
<dbReference type="eggNOG" id="COG2904">
    <property type="taxonomic scope" value="Bacteria"/>
</dbReference>
<dbReference type="HOGENOM" id="CLU_054738_0_0_6"/>
<dbReference type="UniPathway" id="UPA00392"/>
<dbReference type="Proteomes" id="UP000002425">
    <property type="component" value="Chromosome"/>
</dbReference>
<dbReference type="GO" id="GO:0005737">
    <property type="term" value="C:cytoplasm"/>
    <property type="evidence" value="ECO:0007669"/>
    <property type="project" value="UniProtKB-SubCell"/>
</dbReference>
<dbReference type="GO" id="GO:0033739">
    <property type="term" value="F:preQ1 synthase activity"/>
    <property type="evidence" value="ECO:0007669"/>
    <property type="project" value="UniProtKB-UniRule"/>
</dbReference>
<dbReference type="GO" id="GO:0008616">
    <property type="term" value="P:queuosine biosynthetic process"/>
    <property type="evidence" value="ECO:0007669"/>
    <property type="project" value="UniProtKB-UniRule"/>
</dbReference>
<dbReference type="GO" id="GO:0006400">
    <property type="term" value="P:tRNA modification"/>
    <property type="evidence" value="ECO:0007669"/>
    <property type="project" value="UniProtKB-UniRule"/>
</dbReference>
<dbReference type="Gene3D" id="3.30.1130.10">
    <property type="match status" value="2"/>
</dbReference>
<dbReference type="HAMAP" id="MF_00817">
    <property type="entry name" value="QueF_type2"/>
    <property type="match status" value="1"/>
</dbReference>
<dbReference type="InterPro" id="IPR043133">
    <property type="entry name" value="GTP-CH-I_C/QueF"/>
</dbReference>
<dbReference type="InterPro" id="IPR050084">
    <property type="entry name" value="NADPH_dep_7-cyano-7-deazaG_red"/>
</dbReference>
<dbReference type="InterPro" id="IPR029500">
    <property type="entry name" value="QueF"/>
</dbReference>
<dbReference type="InterPro" id="IPR029139">
    <property type="entry name" value="QueF_N"/>
</dbReference>
<dbReference type="InterPro" id="IPR016428">
    <property type="entry name" value="QueF_type2"/>
</dbReference>
<dbReference type="NCBIfam" id="TIGR03138">
    <property type="entry name" value="QueF"/>
    <property type="match status" value="1"/>
</dbReference>
<dbReference type="PANTHER" id="PTHR34354">
    <property type="entry name" value="NADPH-DEPENDENT 7-CYANO-7-DEAZAGUANINE REDUCTASE"/>
    <property type="match status" value="1"/>
</dbReference>
<dbReference type="PANTHER" id="PTHR34354:SF1">
    <property type="entry name" value="NADPH-DEPENDENT 7-CYANO-7-DEAZAGUANINE REDUCTASE"/>
    <property type="match status" value="1"/>
</dbReference>
<dbReference type="Pfam" id="PF14489">
    <property type="entry name" value="QueF"/>
    <property type="match status" value="1"/>
</dbReference>
<dbReference type="Pfam" id="PF14819">
    <property type="entry name" value="QueF_N"/>
    <property type="match status" value="1"/>
</dbReference>
<dbReference type="PIRSF" id="PIRSF004750">
    <property type="entry name" value="Nitrile_oxidored_YqcD_prd"/>
    <property type="match status" value="1"/>
</dbReference>
<dbReference type="SUPFAM" id="SSF55620">
    <property type="entry name" value="Tetrahydrobiopterin biosynthesis enzymes-like"/>
    <property type="match status" value="1"/>
</dbReference>
<comment type="function">
    <text evidence="1">Catalyzes the NADPH-dependent reduction of 7-cyano-7-deazaguanine (preQ0) to 7-aminomethyl-7-deazaguanine (preQ1).</text>
</comment>
<comment type="catalytic activity">
    <reaction evidence="1">
        <text>7-aminomethyl-7-carbaguanine + 2 NADP(+) = 7-cyano-7-deazaguanine + 2 NADPH + 3 H(+)</text>
        <dbReference type="Rhea" id="RHEA:13409"/>
        <dbReference type="ChEBI" id="CHEBI:15378"/>
        <dbReference type="ChEBI" id="CHEBI:45075"/>
        <dbReference type="ChEBI" id="CHEBI:57783"/>
        <dbReference type="ChEBI" id="CHEBI:58349"/>
        <dbReference type="ChEBI" id="CHEBI:58703"/>
        <dbReference type="EC" id="1.7.1.13"/>
    </reaction>
</comment>
<comment type="pathway">
    <text evidence="1">tRNA modification; tRNA-queuosine biosynthesis.</text>
</comment>
<comment type="subunit">
    <text evidence="1">Homodimer.</text>
</comment>
<comment type="subcellular location">
    <subcellularLocation>
        <location evidence="1">Cytoplasm</location>
    </subcellularLocation>
</comment>
<comment type="similarity">
    <text evidence="1">Belongs to the GTP cyclohydrolase I family. QueF type 2 subfamily.</text>
</comment>
<reference key="1">
    <citation type="submission" date="2006-03" db="EMBL/GenBank/DDBJ databases">
        <title>Complete sequence of chromosome of Psychrobacter cryohalolentis K5.</title>
        <authorList>
            <consortium name="US DOE Joint Genome Institute"/>
            <person name="Copeland A."/>
            <person name="Lucas S."/>
            <person name="Lapidus A."/>
            <person name="Barry K."/>
            <person name="Detter J.C."/>
            <person name="Glavina T."/>
            <person name="Hammon N."/>
            <person name="Israni S."/>
            <person name="Dalin E."/>
            <person name="Tice H."/>
            <person name="Pitluck S."/>
            <person name="Brettin T."/>
            <person name="Bruce D."/>
            <person name="Han C."/>
            <person name="Tapia R."/>
            <person name="Sims D.R."/>
            <person name="Gilna P."/>
            <person name="Schmutz J."/>
            <person name="Larimer F."/>
            <person name="Land M."/>
            <person name="Hauser L."/>
            <person name="Kyrpides N."/>
            <person name="Kim E."/>
            <person name="Richardson P."/>
        </authorList>
    </citation>
    <scope>NUCLEOTIDE SEQUENCE [LARGE SCALE GENOMIC DNA]</scope>
    <source>
        <strain>ATCC BAA-1226 / DSM 17306 / VKM B-2378 / K5</strain>
    </source>
</reference>
<proteinExistence type="inferred from homology"/>
<evidence type="ECO:0000255" key="1">
    <source>
        <dbReference type="HAMAP-Rule" id="MF_00817"/>
    </source>
</evidence>
<protein>
    <recommendedName>
        <fullName evidence="1">NADPH-dependent 7-cyano-7-deazaguanine reductase</fullName>
        <ecNumber evidence="1">1.7.1.13</ecNumber>
    </recommendedName>
    <alternativeName>
        <fullName evidence="1">7-cyano-7-carbaguanine reductase</fullName>
    </alternativeName>
    <alternativeName>
        <fullName evidence="1">NADPH-dependent nitrile oxidoreductase</fullName>
    </alternativeName>
    <alternativeName>
        <fullName evidence="1">PreQ(0) reductase</fullName>
    </alternativeName>
</protein>
<accession>Q1QDK8</accession>
<gene>
    <name evidence="1" type="primary">queF</name>
    <name type="ordered locus">Pcryo_0462</name>
</gene>
<feature type="chain" id="PRO_0000247713" description="NADPH-dependent 7-cyano-7-deazaguanine reductase">
    <location>
        <begin position="1"/>
        <end position="285"/>
    </location>
</feature>
<feature type="active site" description="Thioimide intermediate" evidence="1">
    <location>
        <position position="191"/>
    </location>
</feature>
<feature type="active site" description="Proton donor" evidence="1">
    <location>
        <position position="198"/>
    </location>
</feature>
<feature type="binding site" evidence="1">
    <location>
        <begin position="80"/>
        <end position="82"/>
    </location>
    <ligand>
        <name>substrate</name>
    </ligand>
</feature>
<feature type="binding site" evidence="1">
    <location>
        <begin position="82"/>
        <end position="83"/>
    </location>
    <ligand>
        <name>NADPH</name>
        <dbReference type="ChEBI" id="CHEBI:57783"/>
    </ligand>
</feature>
<feature type="binding site" evidence="1">
    <location>
        <begin position="231"/>
        <end position="232"/>
    </location>
    <ligand>
        <name>substrate</name>
    </ligand>
</feature>
<feature type="binding site" evidence="1">
    <location>
        <begin position="260"/>
        <end position="261"/>
    </location>
    <ligand>
        <name>NADPH</name>
        <dbReference type="ChEBI" id="CHEBI:57783"/>
    </ligand>
</feature>
<sequence>MSIHGILGEQTTDYPTEYSPETLYPIARSMGREVIGWQDDKLEVGFDWWQAFELSWLNEQGISQVAIARFGIPASSPFIVESKSLKLYLNSINFTEFGSLETVQTLIAKDLSKCVQAEVNVELFDLEDEHSGLLIAQPDGICIDDALADSTEKVALTLHPDASLLERNTSDAKISEGKTFSFYSNLLRSNCPVTNQPDWGTLAVSITSNKPVNNANMLRYILSFRQHNGFHEQCVEQIFADLSQYYEPSELMVRAWYTRRGGIDINPCRVSDIALLPVPSRLIRQ</sequence>